<proteinExistence type="inferred from homology"/>
<evidence type="ECO:0000255" key="1">
    <source>
        <dbReference type="HAMAP-Rule" id="MF_00012"/>
    </source>
</evidence>
<feature type="chain" id="PRO_1000000977" description="Dihydroxy-acid dehydratase">
    <location>
        <begin position="1"/>
        <end position="554"/>
    </location>
</feature>
<feature type="active site" description="Proton acceptor" evidence="1">
    <location>
        <position position="468"/>
    </location>
</feature>
<feature type="binding site" evidence="1">
    <location>
        <position position="78"/>
    </location>
    <ligand>
        <name>Mg(2+)</name>
        <dbReference type="ChEBI" id="CHEBI:18420"/>
    </ligand>
</feature>
<feature type="binding site" evidence="1">
    <location>
        <position position="119"/>
    </location>
    <ligand>
        <name>[2Fe-2S] cluster</name>
        <dbReference type="ChEBI" id="CHEBI:190135"/>
    </ligand>
</feature>
<feature type="binding site" evidence="1">
    <location>
        <position position="120"/>
    </location>
    <ligand>
        <name>Mg(2+)</name>
        <dbReference type="ChEBI" id="CHEBI:18420"/>
    </ligand>
</feature>
<feature type="binding site" description="via carbamate group" evidence="1">
    <location>
        <position position="121"/>
    </location>
    <ligand>
        <name>Mg(2+)</name>
        <dbReference type="ChEBI" id="CHEBI:18420"/>
    </ligand>
</feature>
<feature type="binding site" evidence="1">
    <location>
        <position position="191"/>
    </location>
    <ligand>
        <name>[2Fe-2S] cluster</name>
        <dbReference type="ChEBI" id="CHEBI:190135"/>
    </ligand>
</feature>
<feature type="binding site" evidence="1">
    <location>
        <position position="442"/>
    </location>
    <ligand>
        <name>Mg(2+)</name>
        <dbReference type="ChEBI" id="CHEBI:18420"/>
    </ligand>
</feature>
<feature type="modified residue" description="N6-carboxylysine" evidence="1">
    <location>
        <position position="121"/>
    </location>
</feature>
<comment type="function">
    <text evidence="1">Functions in the biosynthesis of branched-chain amino acids. Catalyzes the dehydration of (2R,3R)-2,3-dihydroxy-3-methylpentanoate (2,3-dihydroxy-3-methylvalerate) into 2-oxo-3-methylpentanoate (2-oxo-3-methylvalerate) and of (2R)-2,3-dihydroxy-3-methylbutanoate (2,3-dihydroxyisovalerate) into 2-oxo-3-methylbutanoate (2-oxoisovalerate), the penultimate precursor to L-isoleucine and L-valine, respectively.</text>
</comment>
<comment type="catalytic activity">
    <reaction evidence="1">
        <text>(2R)-2,3-dihydroxy-3-methylbutanoate = 3-methyl-2-oxobutanoate + H2O</text>
        <dbReference type="Rhea" id="RHEA:24809"/>
        <dbReference type="ChEBI" id="CHEBI:11851"/>
        <dbReference type="ChEBI" id="CHEBI:15377"/>
        <dbReference type="ChEBI" id="CHEBI:49072"/>
        <dbReference type="EC" id="4.2.1.9"/>
    </reaction>
    <physiologicalReaction direction="left-to-right" evidence="1">
        <dbReference type="Rhea" id="RHEA:24810"/>
    </physiologicalReaction>
</comment>
<comment type="catalytic activity">
    <reaction evidence="1">
        <text>(2R,3R)-2,3-dihydroxy-3-methylpentanoate = (S)-3-methyl-2-oxopentanoate + H2O</text>
        <dbReference type="Rhea" id="RHEA:27694"/>
        <dbReference type="ChEBI" id="CHEBI:15377"/>
        <dbReference type="ChEBI" id="CHEBI:35146"/>
        <dbReference type="ChEBI" id="CHEBI:49258"/>
        <dbReference type="EC" id="4.2.1.9"/>
    </reaction>
    <physiologicalReaction direction="left-to-right" evidence="1">
        <dbReference type="Rhea" id="RHEA:27695"/>
    </physiologicalReaction>
</comment>
<comment type="cofactor">
    <cofactor evidence="1">
        <name>[2Fe-2S] cluster</name>
        <dbReference type="ChEBI" id="CHEBI:190135"/>
    </cofactor>
    <text evidence="1">Binds 1 [2Fe-2S] cluster per subunit. This cluster acts as a Lewis acid cofactor.</text>
</comment>
<comment type="cofactor">
    <cofactor evidence="1">
        <name>Mg(2+)</name>
        <dbReference type="ChEBI" id="CHEBI:18420"/>
    </cofactor>
</comment>
<comment type="pathway">
    <text evidence="1">Amino-acid biosynthesis; L-isoleucine biosynthesis; L-isoleucine from 2-oxobutanoate: step 3/4.</text>
</comment>
<comment type="pathway">
    <text evidence="1">Amino-acid biosynthesis; L-valine biosynthesis; L-valine from pyruvate: step 3/4.</text>
</comment>
<comment type="subunit">
    <text evidence="1">Homodimer.</text>
</comment>
<comment type="similarity">
    <text evidence="1">Belongs to the IlvD/Edd family.</text>
</comment>
<gene>
    <name evidence="1" type="primary">ilvD</name>
    <name type="ordered locus">Cthe_2713</name>
</gene>
<dbReference type="EC" id="4.2.1.9" evidence="1"/>
<dbReference type="EMBL" id="CP000568">
    <property type="protein sequence ID" value="ABN53912.1"/>
    <property type="molecule type" value="Genomic_DNA"/>
</dbReference>
<dbReference type="RefSeq" id="WP_020457899.1">
    <property type="nucleotide sequence ID" value="NC_009012.1"/>
</dbReference>
<dbReference type="SMR" id="A3DIY3"/>
<dbReference type="STRING" id="203119.Cthe_2713"/>
<dbReference type="GeneID" id="35805497"/>
<dbReference type="KEGG" id="cth:Cthe_2713"/>
<dbReference type="eggNOG" id="COG0129">
    <property type="taxonomic scope" value="Bacteria"/>
</dbReference>
<dbReference type="HOGENOM" id="CLU_014271_4_2_9"/>
<dbReference type="OrthoDB" id="9807077at2"/>
<dbReference type="UniPathway" id="UPA00047">
    <property type="reaction ID" value="UER00057"/>
</dbReference>
<dbReference type="UniPathway" id="UPA00049">
    <property type="reaction ID" value="UER00061"/>
</dbReference>
<dbReference type="Proteomes" id="UP000002145">
    <property type="component" value="Chromosome"/>
</dbReference>
<dbReference type="GO" id="GO:0005829">
    <property type="term" value="C:cytosol"/>
    <property type="evidence" value="ECO:0007669"/>
    <property type="project" value="TreeGrafter"/>
</dbReference>
<dbReference type="GO" id="GO:0051537">
    <property type="term" value="F:2 iron, 2 sulfur cluster binding"/>
    <property type="evidence" value="ECO:0007669"/>
    <property type="project" value="UniProtKB-UniRule"/>
</dbReference>
<dbReference type="GO" id="GO:0004160">
    <property type="term" value="F:dihydroxy-acid dehydratase activity"/>
    <property type="evidence" value="ECO:0007669"/>
    <property type="project" value="UniProtKB-UniRule"/>
</dbReference>
<dbReference type="GO" id="GO:0000287">
    <property type="term" value="F:magnesium ion binding"/>
    <property type="evidence" value="ECO:0007669"/>
    <property type="project" value="UniProtKB-UniRule"/>
</dbReference>
<dbReference type="GO" id="GO:0009097">
    <property type="term" value="P:isoleucine biosynthetic process"/>
    <property type="evidence" value="ECO:0007669"/>
    <property type="project" value="UniProtKB-UniRule"/>
</dbReference>
<dbReference type="GO" id="GO:0009099">
    <property type="term" value="P:L-valine biosynthetic process"/>
    <property type="evidence" value="ECO:0007669"/>
    <property type="project" value="UniProtKB-UniRule"/>
</dbReference>
<dbReference type="FunFam" id="3.50.30.80:FF:000001">
    <property type="entry name" value="Dihydroxy-acid dehydratase"/>
    <property type="match status" value="1"/>
</dbReference>
<dbReference type="Gene3D" id="3.50.30.80">
    <property type="entry name" value="IlvD/EDD C-terminal domain-like"/>
    <property type="match status" value="1"/>
</dbReference>
<dbReference type="HAMAP" id="MF_00012">
    <property type="entry name" value="IlvD"/>
    <property type="match status" value="1"/>
</dbReference>
<dbReference type="InterPro" id="IPR042096">
    <property type="entry name" value="Dihydro-acid_dehy_C"/>
</dbReference>
<dbReference type="InterPro" id="IPR004404">
    <property type="entry name" value="DihydroxyA_deHydtase"/>
</dbReference>
<dbReference type="InterPro" id="IPR020558">
    <property type="entry name" value="DiOHA_6PGluconate_deHydtase_CS"/>
</dbReference>
<dbReference type="InterPro" id="IPR056740">
    <property type="entry name" value="ILV_EDD_C"/>
</dbReference>
<dbReference type="InterPro" id="IPR000581">
    <property type="entry name" value="ILV_EDD_N"/>
</dbReference>
<dbReference type="InterPro" id="IPR037237">
    <property type="entry name" value="IlvD/EDD_N"/>
</dbReference>
<dbReference type="NCBIfam" id="TIGR00110">
    <property type="entry name" value="ilvD"/>
    <property type="match status" value="1"/>
</dbReference>
<dbReference type="NCBIfam" id="NF002068">
    <property type="entry name" value="PRK00911.1"/>
    <property type="match status" value="1"/>
</dbReference>
<dbReference type="NCBIfam" id="NF004784">
    <property type="entry name" value="PRK06131.1"/>
    <property type="match status" value="1"/>
</dbReference>
<dbReference type="PANTHER" id="PTHR43661">
    <property type="entry name" value="D-XYLONATE DEHYDRATASE"/>
    <property type="match status" value="1"/>
</dbReference>
<dbReference type="PANTHER" id="PTHR43661:SF3">
    <property type="entry name" value="D-XYLONATE DEHYDRATASE YAGF-RELATED"/>
    <property type="match status" value="1"/>
</dbReference>
<dbReference type="Pfam" id="PF24877">
    <property type="entry name" value="ILV_EDD_C"/>
    <property type="match status" value="1"/>
</dbReference>
<dbReference type="Pfam" id="PF00920">
    <property type="entry name" value="ILVD_EDD_N"/>
    <property type="match status" value="1"/>
</dbReference>
<dbReference type="SUPFAM" id="SSF143975">
    <property type="entry name" value="IlvD/EDD N-terminal domain-like"/>
    <property type="match status" value="1"/>
</dbReference>
<dbReference type="SUPFAM" id="SSF52016">
    <property type="entry name" value="LeuD/IlvD-like"/>
    <property type="match status" value="1"/>
</dbReference>
<dbReference type="PROSITE" id="PS00886">
    <property type="entry name" value="ILVD_EDD_1"/>
    <property type="match status" value="1"/>
</dbReference>
<dbReference type="PROSITE" id="PS00887">
    <property type="entry name" value="ILVD_EDD_2"/>
    <property type="match status" value="1"/>
</dbReference>
<protein>
    <recommendedName>
        <fullName evidence="1">Dihydroxy-acid dehydratase</fullName>
        <shortName evidence="1">DAD</shortName>
        <ecNumber evidence="1">4.2.1.9</ecNumber>
    </recommendedName>
</protein>
<name>ILVD_ACET2</name>
<sequence length="554" mass="58880">MRSDAVKKGIERAPHRALFKAMGYTDEELERPLIGVVNSRNEIVPGHIHLDKIAEAVKAGIRMAGGTPVEFGAIGVCDGIAMGHTGMKYSLATRELIADSCEAMALAHSFDGMVFIPNCDKIVPGMLMAAARINVPAIVVSGGPMLSLRHNDKNLDLNSVFEAVGAYKAGKMTEKEVWEYEEKACPGCGSCSGMFTANSMNCLTEVLGMGLPGNGTVPAVYAERIRLAKKAGMKIVELVEKDIKPSDILTPKAFENALAVDMALGCSTNSVLHLPAIANEVGMEINLDIINEISSKVPNLCKLAPAGHHHVQDLYAAGGIPAVMKELSKKNLLHLDLITVTGKTVRENIENAKVRDYEVIRSIDNPYSPTGGIAVLRGNLAPDGAVVKRSAVAPEMLVHKGPARVFDSEDAAIEAIYNGKINKGDVVIIRYEGPKGGPGMREMLSPTSAIAGMGLDKDVALITDGRFSGATRGASIGHVSPEAMAGGPIAIVRDGDIISIDIPNGKLDVEIPDSEIQKRLKEWKAPAPKITKGYLGRYAKLVSSANKGAILENK</sequence>
<accession>A3DIY3</accession>
<organism>
    <name type="scientific">Acetivibrio thermocellus (strain ATCC 27405 / DSM 1237 / JCM 9322 / NBRC 103400 / NCIMB 10682 / NRRL B-4536 / VPI 7372)</name>
    <name type="common">Clostridium thermocellum</name>
    <dbReference type="NCBI Taxonomy" id="203119"/>
    <lineage>
        <taxon>Bacteria</taxon>
        <taxon>Bacillati</taxon>
        <taxon>Bacillota</taxon>
        <taxon>Clostridia</taxon>
        <taxon>Eubacteriales</taxon>
        <taxon>Oscillospiraceae</taxon>
        <taxon>Acetivibrio</taxon>
    </lineage>
</organism>
<keyword id="KW-0001">2Fe-2S</keyword>
<keyword id="KW-0028">Amino-acid biosynthesis</keyword>
<keyword id="KW-0100">Branched-chain amino acid biosynthesis</keyword>
<keyword id="KW-0408">Iron</keyword>
<keyword id="KW-0411">Iron-sulfur</keyword>
<keyword id="KW-0456">Lyase</keyword>
<keyword id="KW-0460">Magnesium</keyword>
<keyword id="KW-0479">Metal-binding</keyword>
<keyword id="KW-1185">Reference proteome</keyword>
<reference key="1">
    <citation type="submission" date="2007-02" db="EMBL/GenBank/DDBJ databases">
        <title>Complete sequence of Clostridium thermocellum ATCC 27405.</title>
        <authorList>
            <consortium name="US DOE Joint Genome Institute"/>
            <person name="Copeland A."/>
            <person name="Lucas S."/>
            <person name="Lapidus A."/>
            <person name="Barry K."/>
            <person name="Detter J.C."/>
            <person name="Glavina del Rio T."/>
            <person name="Hammon N."/>
            <person name="Israni S."/>
            <person name="Dalin E."/>
            <person name="Tice H."/>
            <person name="Pitluck S."/>
            <person name="Chertkov O."/>
            <person name="Brettin T."/>
            <person name="Bruce D."/>
            <person name="Han C."/>
            <person name="Tapia R."/>
            <person name="Gilna P."/>
            <person name="Schmutz J."/>
            <person name="Larimer F."/>
            <person name="Land M."/>
            <person name="Hauser L."/>
            <person name="Kyrpides N."/>
            <person name="Mikhailova N."/>
            <person name="Wu J.H.D."/>
            <person name="Newcomb M."/>
            <person name="Richardson P."/>
        </authorList>
    </citation>
    <scope>NUCLEOTIDE SEQUENCE [LARGE SCALE GENOMIC DNA]</scope>
    <source>
        <strain>ATCC 27405 / DSM 1237 / JCM 9322 / NBRC 103400 / NCIMB 10682 / NRRL B-4536 / VPI 7372</strain>
    </source>
</reference>